<proteinExistence type="evidence at protein level"/>
<evidence type="ECO:0000250" key="1"/>
<evidence type="ECO:0000305" key="2"/>
<evidence type="ECO:0007829" key="3">
    <source>
        <dbReference type="PDB" id="5JZX"/>
    </source>
</evidence>
<keyword id="KW-0002">3D-structure</keyword>
<keyword id="KW-0131">Cell cycle</keyword>
<keyword id="KW-0132">Cell division</keyword>
<keyword id="KW-0133">Cell shape</keyword>
<keyword id="KW-0961">Cell wall biogenesis/degradation</keyword>
<keyword id="KW-0963">Cytoplasm</keyword>
<keyword id="KW-0274">FAD</keyword>
<keyword id="KW-0285">Flavoprotein</keyword>
<keyword id="KW-0521">NADP</keyword>
<keyword id="KW-0560">Oxidoreductase</keyword>
<keyword id="KW-0573">Peptidoglycan synthesis</keyword>
<keyword id="KW-1185">Reference proteome</keyword>
<protein>
    <recommendedName>
        <fullName>UDP-N-acetylenolpyruvoylglucosamine reductase</fullName>
        <ecNumber>1.3.1.98</ecNumber>
    </recommendedName>
    <alternativeName>
        <fullName>UDP-N-acetylmuramate dehydrogenase</fullName>
    </alternativeName>
</protein>
<dbReference type="EC" id="1.3.1.98"/>
<dbReference type="EMBL" id="AL123456">
    <property type="protein sequence ID" value="CCP43216.1"/>
    <property type="molecule type" value="Genomic_DNA"/>
</dbReference>
<dbReference type="PIR" id="E70743">
    <property type="entry name" value="E70743"/>
</dbReference>
<dbReference type="RefSeq" id="NP_214996.1">
    <property type="nucleotide sequence ID" value="NC_000962.3"/>
</dbReference>
<dbReference type="RefSeq" id="WP_003402354.1">
    <property type="nucleotide sequence ID" value="NZ_NVQJ01000002.1"/>
</dbReference>
<dbReference type="PDB" id="5JZX">
    <property type="method" value="X-ray"/>
    <property type="resolution" value="2.20 A"/>
    <property type="chains" value="A/B/C/D/E/F=1-369"/>
</dbReference>
<dbReference type="PDBsum" id="5JZX"/>
<dbReference type="SMR" id="P9WJL9"/>
<dbReference type="FunCoup" id="P9WJL9">
    <property type="interactions" value="100"/>
</dbReference>
<dbReference type="STRING" id="83332.Rv0482"/>
<dbReference type="PaxDb" id="83332-Rv0482"/>
<dbReference type="DNASU" id="887169"/>
<dbReference type="GeneID" id="887169"/>
<dbReference type="KEGG" id="mtu:Rv0482"/>
<dbReference type="TubercuList" id="Rv0482"/>
<dbReference type="eggNOG" id="COG0812">
    <property type="taxonomic scope" value="Bacteria"/>
</dbReference>
<dbReference type="InParanoid" id="P9WJL9"/>
<dbReference type="OrthoDB" id="9804753at2"/>
<dbReference type="PhylomeDB" id="P9WJL9"/>
<dbReference type="BRENDA" id="1.3.1.98">
    <property type="organism ID" value="3445"/>
</dbReference>
<dbReference type="UniPathway" id="UPA00219"/>
<dbReference type="Proteomes" id="UP000001584">
    <property type="component" value="Chromosome"/>
</dbReference>
<dbReference type="GO" id="GO:0005829">
    <property type="term" value="C:cytosol"/>
    <property type="evidence" value="ECO:0000318"/>
    <property type="project" value="GO_Central"/>
</dbReference>
<dbReference type="GO" id="GO:0071949">
    <property type="term" value="F:FAD binding"/>
    <property type="evidence" value="ECO:0007669"/>
    <property type="project" value="InterPro"/>
</dbReference>
<dbReference type="GO" id="GO:0050660">
    <property type="term" value="F:flavin adenine dinucleotide binding"/>
    <property type="evidence" value="ECO:0000318"/>
    <property type="project" value="GO_Central"/>
</dbReference>
<dbReference type="GO" id="GO:0008762">
    <property type="term" value="F:UDP-N-acetylmuramate dehydrogenase activity"/>
    <property type="evidence" value="ECO:0000318"/>
    <property type="project" value="GO_Central"/>
</dbReference>
<dbReference type="GO" id="GO:0051301">
    <property type="term" value="P:cell division"/>
    <property type="evidence" value="ECO:0007669"/>
    <property type="project" value="UniProtKB-KW"/>
</dbReference>
<dbReference type="GO" id="GO:0071555">
    <property type="term" value="P:cell wall organization"/>
    <property type="evidence" value="ECO:0000318"/>
    <property type="project" value="GO_Central"/>
</dbReference>
<dbReference type="GO" id="GO:0009252">
    <property type="term" value="P:peptidoglycan biosynthetic process"/>
    <property type="evidence" value="ECO:0007669"/>
    <property type="project" value="UniProtKB-UniRule"/>
</dbReference>
<dbReference type="GO" id="GO:0008360">
    <property type="term" value="P:regulation of cell shape"/>
    <property type="evidence" value="ECO:0007669"/>
    <property type="project" value="UniProtKB-KW"/>
</dbReference>
<dbReference type="Gene3D" id="3.30.465.10">
    <property type="match status" value="1"/>
</dbReference>
<dbReference type="Gene3D" id="3.90.78.10">
    <property type="entry name" value="UDP-N-acetylenolpyruvoylglucosamine reductase, C-terminal domain"/>
    <property type="match status" value="1"/>
</dbReference>
<dbReference type="Gene3D" id="3.30.43.10">
    <property type="entry name" value="Uridine Diphospho-n-acetylenolpyruvylglucosamine Reductase, domain 2"/>
    <property type="match status" value="1"/>
</dbReference>
<dbReference type="HAMAP" id="MF_00037">
    <property type="entry name" value="MurB"/>
    <property type="match status" value="1"/>
</dbReference>
<dbReference type="InterPro" id="IPR016166">
    <property type="entry name" value="FAD-bd_PCMH"/>
</dbReference>
<dbReference type="InterPro" id="IPR036318">
    <property type="entry name" value="FAD-bd_PCMH-like_sf"/>
</dbReference>
<dbReference type="InterPro" id="IPR016167">
    <property type="entry name" value="FAD-bd_PCMH_sub1"/>
</dbReference>
<dbReference type="InterPro" id="IPR016169">
    <property type="entry name" value="FAD-bd_PCMH_sub2"/>
</dbReference>
<dbReference type="InterPro" id="IPR003170">
    <property type="entry name" value="MurB"/>
</dbReference>
<dbReference type="InterPro" id="IPR011601">
    <property type="entry name" value="MurB_C"/>
</dbReference>
<dbReference type="InterPro" id="IPR036635">
    <property type="entry name" value="MurB_C_sf"/>
</dbReference>
<dbReference type="InterPro" id="IPR006094">
    <property type="entry name" value="Oxid_FAD_bind_N"/>
</dbReference>
<dbReference type="NCBIfam" id="TIGR00179">
    <property type="entry name" value="murB"/>
    <property type="match status" value="1"/>
</dbReference>
<dbReference type="NCBIfam" id="NF010478">
    <property type="entry name" value="PRK13903.1"/>
    <property type="match status" value="1"/>
</dbReference>
<dbReference type="PANTHER" id="PTHR21071">
    <property type="entry name" value="UDP-N-ACETYLENOLPYRUVOYLGLUCOSAMINE REDUCTASE"/>
    <property type="match status" value="1"/>
</dbReference>
<dbReference type="PANTHER" id="PTHR21071:SF4">
    <property type="entry name" value="UDP-N-ACETYLENOLPYRUVOYLGLUCOSAMINE REDUCTASE"/>
    <property type="match status" value="1"/>
</dbReference>
<dbReference type="Pfam" id="PF01565">
    <property type="entry name" value="FAD_binding_4"/>
    <property type="match status" value="1"/>
</dbReference>
<dbReference type="Pfam" id="PF02873">
    <property type="entry name" value="MurB_C"/>
    <property type="match status" value="1"/>
</dbReference>
<dbReference type="SUPFAM" id="SSF56176">
    <property type="entry name" value="FAD-binding/transporter-associated domain-like"/>
    <property type="match status" value="1"/>
</dbReference>
<dbReference type="SUPFAM" id="SSF56194">
    <property type="entry name" value="Uridine diphospho-N-Acetylenolpyruvylglucosamine reductase, MurB, C-terminal domain"/>
    <property type="match status" value="1"/>
</dbReference>
<dbReference type="PROSITE" id="PS51387">
    <property type="entry name" value="FAD_PCMH"/>
    <property type="match status" value="1"/>
</dbReference>
<feature type="chain" id="PRO_0000179230" description="UDP-N-acetylenolpyruvoylglucosamine reductase">
    <location>
        <begin position="1"/>
        <end position="369"/>
    </location>
</feature>
<feature type="domain" description="FAD-binding PCMH-type">
    <location>
        <begin position="29"/>
        <end position="202"/>
    </location>
</feature>
<feature type="active site" evidence="1">
    <location>
        <position position="176"/>
    </location>
</feature>
<feature type="active site" description="Proton donor" evidence="1">
    <location>
        <position position="257"/>
    </location>
</feature>
<feature type="active site" evidence="1">
    <location>
        <position position="361"/>
    </location>
</feature>
<feature type="helix" evidence="3">
    <location>
        <begin position="9"/>
        <end position="12"/>
    </location>
</feature>
<feature type="strand" evidence="3">
    <location>
        <begin position="14"/>
        <end position="20"/>
    </location>
</feature>
<feature type="helix" evidence="3">
    <location>
        <begin position="22"/>
        <end position="24"/>
    </location>
</feature>
<feature type="strand" evidence="3">
    <location>
        <begin position="25"/>
        <end position="27"/>
    </location>
</feature>
<feature type="strand" evidence="3">
    <location>
        <begin position="32"/>
        <end position="39"/>
    </location>
</feature>
<feature type="helix" evidence="3">
    <location>
        <begin position="42"/>
        <end position="55"/>
    </location>
</feature>
<feature type="strand" evidence="3">
    <location>
        <begin position="64"/>
        <end position="68"/>
    </location>
</feature>
<feature type="strand" evidence="3">
    <location>
        <begin position="70"/>
        <end position="74"/>
    </location>
</feature>
<feature type="strand" evidence="3">
    <location>
        <begin position="82"/>
        <end position="86"/>
    </location>
</feature>
<feature type="strand" evidence="3">
    <location>
        <begin position="91"/>
        <end position="94"/>
    </location>
</feature>
<feature type="strand" evidence="3">
    <location>
        <begin position="97"/>
        <end position="101"/>
    </location>
</feature>
<feature type="helix" evidence="3">
    <location>
        <begin position="106"/>
        <end position="115"/>
    </location>
</feature>
<feature type="strand" evidence="3">
    <location>
        <begin position="119"/>
        <end position="121"/>
    </location>
</feature>
<feature type="helix" evidence="3">
    <location>
        <begin position="122"/>
        <end position="124"/>
    </location>
</feature>
<feature type="strand" evidence="3">
    <location>
        <begin position="129"/>
        <end position="131"/>
    </location>
</feature>
<feature type="turn" evidence="3">
    <location>
        <begin position="132"/>
        <end position="138"/>
    </location>
</feature>
<feature type="helix" evidence="3">
    <location>
        <begin position="146"/>
        <end position="148"/>
    </location>
</feature>
<feature type="strand" evidence="3">
    <location>
        <begin position="150"/>
        <end position="157"/>
    </location>
</feature>
<feature type="turn" evidence="3">
    <location>
        <begin position="158"/>
        <end position="161"/>
    </location>
</feature>
<feature type="strand" evidence="3">
    <location>
        <begin position="162"/>
        <end position="167"/>
    </location>
</feature>
<feature type="helix" evidence="3">
    <location>
        <begin position="169"/>
        <end position="171"/>
    </location>
</feature>
<feature type="turn" evidence="3">
    <location>
        <begin position="185"/>
        <end position="187"/>
    </location>
</feature>
<feature type="strand" evidence="3">
    <location>
        <begin position="190"/>
        <end position="198"/>
    </location>
</feature>
<feature type="helix" evidence="3">
    <location>
        <begin position="211"/>
        <end position="217"/>
    </location>
</feature>
<feature type="helix" evidence="3">
    <location>
        <begin position="227"/>
        <end position="240"/>
    </location>
</feature>
<feature type="helix" evidence="3">
    <location>
        <begin position="250"/>
        <end position="252"/>
    </location>
</feature>
<feature type="helix" evidence="3">
    <location>
        <begin position="266"/>
        <end position="277"/>
    </location>
</feature>
<feature type="strand" evidence="3">
    <location>
        <begin position="286"/>
        <end position="289"/>
    </location>
</feature>
<feature type="strand" evidence="3">
    <location>
        <begin position="292"/>
        <end position="295"/>
    </location>
</feature>
<feature type="helix" evidence="3">
    <location>
        <begin position="297"/>
        <end position="303"/>
    </location>
</feature>
<feature type="strand" evidence="3">
    <location>
        <begin position="317"/>
        <end position="320"/>
    </location>
</feature>
<feature type="strand" evidence="3">
    <location>
        <begin position="328"/>
        <end position="330"/>
    </location>
</feature>
<feature type="helix" evidence="3">
    <location>
        <begin position="336"/>
        <end position="354"/>
    </location>
</feature>
<feature type="strand" evidence="3">
    <location>
        <begin position="362"/>
        <end position="366"/>
    </location>
</feature>
<reference key="1">
    <citation type="journal article" date="1998" name="Nature">
        <title>Deciphering the biology of Mycobacterium tuberculosis from the complete genome sequence.</title>
        <authorList>
            <person name="Cole S.T."/>
            <person name="Brosch R."/>
            <person name="Parkhill J."/>
            <person name="Garnier T."/>
            <person name="Churcher C.M."/>
            <person name="Harris D.E."/>
            <person name="Gordon S.V."/>
            <person name="Eiglmeier K."/>
            <person name="Gas S."/>
            <person name="Barry C.E. III"/>
            <person name="Tekaia F."/>
            <person name="Badcock K."/>
            <person name="Basham D."/>
            <person name="Brown D."/>
            <person name="Chillingworth T."/>
            <person name="Connor R."/>
            <person name="Davies R.M."/>
            <person name="Devlin K."/>
            <person name="Feltwell T."/>
            <person name="Gentles S."/>
            <person name="Hamlin N."/>
            <person name="Holroyd S."/>
            <person name="Hornsby T."/>
            <person name="Jagels K."/>
            <person name="Krogh A."/>
            <person name="McLean J."/>
            <person name="Moule S."/>
            <person name="Murphy L.D."/>
            <person name="Oliver S."/>
            <person name="Osborne J."/>
            <person name="Quail M.A."/>
            <person name="Rajandream M.A."/>
            <person name="Rogers J."/>
            <person name="Rutter S."/>
            <person name="Seeger K."/>
            <person name="Skelton S."/>
            <person name="Squares S."/>
            <person name="Squares R."/>
            <person name="Sulston J.E."/>
            <person name="Taylor K."/>
            <person name="Whitehead S."/>
            <person name="Barrell B.G."/>
        </authorList>
    </citation>
    <scope>NUCLEOTIDE SEQUENCE [LARGE SCALE GENOMIC DNA]</scope>
    <source>
        <strain>ATCC 25618 / H37Rv</strain>
    </source>
</reference>
<reference key="2">
    <citation type="journal article" date="2011" name="Mol. Cell. Proteomics">
        <title>Proteogenomic analysis of Mycobacterium tuberculosis by high resolution mass spectrometry.</title>
        <authorList>
            <person name="Kelkar D.S."/>
            <person name="Kumar D."/>
            <person name="Kumar P."/>
            <person name="Balakrishnan L."/>
            <person name="Muthusamy B."/>
            <person name="Yadav A.K."/>
            <person name="Shrivastava P."/>
            <person name="Marimuthu A."/>
            <person name="Anand S."/>
            <person name="Sundaram H."/>
            <person name="Kingsbury R."/>
            <person name="Harsha H.C."/>
            <person name="Nair B."/>
            <person name="Prasad T.S."/>
            <person name="Chauhan D.S."/>
            <person name="Katoch K."/>
            <person name="Katoch V.M."/>
            <person name="Kumar P."/>
            <person name="Chaerkady R."/>
            <person name="Ramachandran S."/>
            <person name="Dash D."/>
            <person name="Pandey A."/>
        </authorList>
    </citation>
    <scope>IDENTIFICATION BY MASS SPECTROMETRY [LARGE SCALE ANALYSIS]</scope>
    <source>
        <strain>ATCC 25618 / H37Rv</strain>
    </source>
</reference>
<gene>
    <name type="primary">murB</name>
    <name type="ordered locus">Rv0482</name>
    <name type="ORF">MTCY20G9.08</name>
</gene>
<organism>
    <name type="scientific">Mycobacterium tuberculosis (strain ATCC 25618 / H37Rv)</name>
    <dbReference type="NCBI Taxonomy" id="83332"/>
    <lineage>
        <taxon>Bacteria</taxon>
        <taxon>Bacillati</taxon>
        <taxon>Actinomycetota</taxon>
        <taxon>Actinomycetes</taxon>
        <taxon>Mycobacteriales</taxon>
        <taxon>Mycobacteriaceae</taxon>
        <taxon>Mycobacterium</taxon>
        <taxon>Mycobacterium tuberculosis complex</taxon>
    </lineage>
</organism>
<sequence>MKRSGVGSLFAGAHIAEAVPLAPLTTLRVGPIARRVITCTSAEQVVAALRHLDSAAKTGADRPLVFAGGSNLVIAENLTDLTVVRLANSGITIDGNLVRAEAGAVFDDVVVRAIEQGLGGLECLSGIPGSAGATPVQNVGAYGAEVSDTITRVRLLDRCTGEVRWVSARDLRFGYRTSVLKHADGLAVPTVVLEVEFALDPSGRSAPLRYGELIAALNATSGERADPQAVREAVLALRARKGMVLDPTDHDTWSVGSFFTNPVVTQDVYERLAGDAATRKDGPVPHYPAPDGVKLAAGWLVERAGFGKGYPDAGAAPCRLSTKHALALTNRGGATAEDVVTLARAVRDGVHDVFGITLKPEPVLIGCML</sequence>
<accession>P9WJL9</accession>
<accession>L0T3W0</accession>
<accession>P65460</accession>
<accession>Q11148</accession>
<comment type="function">
    <text evidence="1">Cell wall formation.</text>
</comment>
<comment type="catalytic activity">
    <reaction>
        <text>UDP-N-acetyl-alpha-D-muramate + NADP(+) = UDP-N-acetyl-3-O-(1-carboxyvinyl)-alpha-D-glucosamine + NADPH + H(+)</text>
        <dbReference type="Rhea" id="RHEA:12248"/>
        <dbReference type="ChEBI" id="CHEBI:15378"/>
        <dbReference type="ChEBI" id="CHEBI:57783"/>
        <dbReference type="ChEBI" id="CHEBI:58349"/>
        <dbReference type="ChEBI" id="CHEBI:68483"/>
        <dbReference type="ChEBI" id="CHEBI:70757"/>
        <dbReference type="EC" id="1.3.1.98"/>
    </reaction>
</comment>
<comment type="cofactor">
    <cofactor evidence="1">
        <name>FAD</name>
        <dbReference type="ChEBI" id="CHEBI:57692"/>
    </cofactor>
</comment>
<comment type="pathway">
    <text>Cell wall biogenesis; peptidoglycan biosynthesis.</text>
</comment>
<comment type="subcellular location">
    <subcellularLocation>
        <location evidence="1">Cytoplasm</location>
    </subcellularLocation>
</comment>
<comment type="similarity">
    <text evidence="2">Belongs to the MurB family.</text>
</comment>
<name>MURB_MYCTU</name>